<sequence>MLSPEALTTAVDAAQQAIALADTLDVLARVKTEHLGDRSPLALARQALAVLPKEQRAEAGKRVNAARNAAQRSYDERLATLRAERDAAVLVAEGIDVTLPSTRVPAGARHPIIMLAEHVADTFIAMGWELAEGPEVETEQFNFDALNFPADHPARGEQDTFYIAPEDSRQLLRTHTSPVQIRTLLARELPVYIISIGRTFRTDELDATHTPIFHQVEGLAVDRGLSMAHLRGTLDAFARAEFGPSARTRIRPHFFPFTEPSAEVDVWFANKIGGADWVEWGGCGMVHPNVLRATGIDPDLYSGFAFGMGLERTLQFRNGIPDMRDMVEGDVRFSLPFGVGA</sequence>
<dbReference type="EC" id="6.1.1.20" evidence="1"/>
<dbReference type="EMBL" id="LT708304">
    <property type="protein sequence ID" value="SIU00280.1"/>
    <property type="molecule type" value="Genomic_DNA"/>
</dbReference>
<dbReference type="RefSeq" id="NP_855329.1">
    <property type="nucleotide sequence ID" value="NC_002945.3"/>
</dbReference>
<dbReference type="SMR" id="Q7VEV4"/>
<dbReference type="KEGG" id="mbo:BQ2027_MB1676"/>
<dbReference type="PATRIC" id="fig|233413.5.peg.1829"/>
<dbReference type="Proteomes" id="UP000001419">
    <property type="component" value="Chromosome"/>
</dbReference>
<dbReference type="GO" id="GO:0005737">
    <property type="term" value="C:cytoplasm"/>
    <property type="evidence" value="ECO:0007669"/>
    <property type="project" value="UniProtKB-SubCell"/>
</dbReference>
<dbReference type="GO" id="GO:0005524">
    <property type="term" value="F:ATP binding"/>
    <property type="evidence" value="ECO:0007669"/>
    <property type="project" value="UniProtKB-UniRule"/>
</dbReference>
<dbReference type="GO" id="GO:0000287">
    <property type="term" value="F:magnesium ion binding"/>
    <property type="evidence" value="ECO:0007669"/>
    <property type="project" value="UniProtKB-UniRule"/>
</dbReference>
<dbReference type="GO" id="GO:0004826">
    <property type="term" value="F:phenylalanine-tRNA ligase activity"/>
    <property type="evidence" value="ECO:0007669"/>
    <property type="project" value="UniProtKB-UniRule"/>
</dbReference>
<dbReference type="GO" id="GO:0000049">
    <property type="term" value="F:tRNA binding"/>
    <property type="evidence" value="ECO:0007669"/>
    <property type="project" value="InterPro"/>
</dbReference>
<dbReference type="GO" id="GO:0006432">
    <property type="term" value="P:phenylalanyl-tRNA aminoacylation"/>
    <property type="evidence" value="ECO:0007669"/>
    <property type="project" value="UniProtKB-UniRule"/>
</dbReference>
<dbReference type="CDD" id="cd00496">
    <property type="entry name" value="PheRS_alpha_core"/>
    <property type="match status" value="1"/>
</dbReference>
<dbReference type="FunFam" id="3.30.930.10:FF:000003">
    <property type="entry name" value="Phenylalanine--tRNA ligase alpha subunit"/>
    <property type="match status" value="1"/>
</dbReference>
<dbReference type="Gene3D" id="3.30.930.10">
    <property type="entry name" value="Bira Bifunctional Protein, Domain 2"/>
    <property type="match status" value="1"/>
</dbReference>
<dbReference type="HAMAP" id="MF_00281">
    <property type="entry name" value="Phe_tRNA_synth_alpha1"/>
    <property type="match status" value="1"/>
</dbReference>
<dbReference type="InterPro" id="IPR006195">
    <property type="entry name" value="aa-tRNA-synth_II"/>
</dbReference>
<dbReference type="InterPro" id="IPR045864">
    <property type="entry name" value="aa-tRNA-synth_II/BPL/LPL"/>
</dbReference>
<dbReference type="InterPro" id="IPR004529">
    <property type="entry name" value="Phe-tRNA-synth_IIc_asu"/>
</dbReference>
<dbReference type="InterPro" id="IPR004188">
    <property type="entry name" value="Phe-tRNA_ligase_II_N"/>
</dbReference>
<dbReference type="InterPro" id="IPR022911">
    <property type="entry name" value="Phe_tRNA_ligase_alpha1_bac"/>
</dbReference>
<dbReference type="InterPro" id="IPR002319">
    <property type="entry name" value="Phenylalanyl-tRNA_Synthase"/>
</dbReference>
<dbReference type="InterPro" id="IPR010978">
    <property type="entry name" value="tRNA-bd_arm"/>
</dbReference>
<dbReference type="NCBIfam" id="TIGR00468">
    <property type="entry name" value="pheS"/>
    <property type="match status" value="1"/>
</dbReference>
<dbReference type="PANTHER" id="PTHR11538:SF41">
    <property type="entry name" value="PHENYLALANINE--TRNA LIGASE, MITOCHONDRIAL"/>
    <property type="match status" value="1"/>
</dbReference>
<dbReference type="PANTHER" id="PTHR11538">
    <property type="entry name" value="PHENYLALANYL-TRNA SYNTHETASE"/>
    <property type="match status" value="1"/>
</dbReference>
<dbReference type="Pfam" id="PF02912">
    <property type="entry name" value="Phe_tRNA-synt_N"/>
    <property type="match status" value="1"/>
</dbReference>
<dbReference type="Pfam" id="PF01409">
    <property type="entry name" value="tRNA-synt_2d"/>
    <property type="match status" value="1"/>
</dbReference>
<dbReference type="SUPFAM" id="SSF55681">
    <property type="entry name" value="Class II aaRS and biotin synthetases"/>
    <property type="match status" value="1"/>
</dbReference>
<dbReference type="SUPFAM" id="SSF46589">
    <property type="entry name" value="tRNA-binding arm"/>
    <property type="match status" value="1"/>
</dbReference>
<dbReference type="PROSITE" id="PS50862">
    <property type="entry name" value="AA_TRNA_LIGASE_II"/>
    <property type="match status" value="1"/>
</dbReference>
<protein>
    <recommendedName>
        <fullName evidence="1">Phenylalanine--tRNA ligase alpha subunit</fullName>
        <ecNumber evidence="1">6.1.1.20</ecNumber>
    </recommendedName>
    <alternativeName>
        <fullName evidence="1">Phenylalanyl-tRNA synthetase alpha subunit</fullName>
        <shortName evidence="1">PheRS</shortName>
    </alternativeName>
</protein>
<accession>Q7VEV4</accession>
<accession>A0A1R3XYY2</accession>
<accession>X2BIW8</accession>
<name>SYFA_MYCBO</name>
<proteinExistence type="inferred from homology"/>
<organism>
    <name type="scientific">Mycobacterium bovis (strain ATCC BAA-935 / AF2122/97)</name>
    <dbReference type="NCBI Taxonomy" id="233413"/>
    <lineage>
        <taxon>Bacteria</taxon>
        <taxon>Bacillati</taxon>
        <taxon>Actinomycetota</taxon>
        <taxon>Actinomycetes</taxon>
        <taxon>Mycobacteriales</taxon>
        <taxon>Mycobacteriaceae</taxon>
        <taxon>Mycobacterium</taxon>
        <taxon>Mycobacterium tuberculosis complex</taxon>
    </lineage>
</organism>
<comment type="catalytic activity">
    <reaction evidence="1">
        <text>tRNA(Phe) + L-phenylalanine + ATP = L-phenylalanyl-tRNA(Phe) + AMP + diphosphate + H(+)</text>
        <dbReference type="Rhea" id="RHEA:19413"/>
        <dbReference type="Rhea" id="RHEA-COMP:9668"/>
        <dbReference type="Rhea" id="RHEA-COMP:9699"/>
        <dbReference type="ChEBI" id="CHEBI:15378"/>
        <dbReference type="ChEBI" id="CHEBI:30616"/>
        <dbReference type="ChEBI" id="CHEBI:33019"/>
        <dbReference type="ChEBI" id="CHEBI:58095"/>
        <dbReference type="ChEBI" id="CHEBI:78442"/>
        <dbReference type="ChEBI" id="CHEBI:78531"/>
        <dbReference type="ChEBI" id="CHEBI:456215"/>
        <dbReference type="EC" id="6.1.1.20"/>
    </reaction>
</comment>
<comment type="cofactor">
    <cofactor evidence="1">
        <name>Mg(2+)</name>
        <dbReference type="ChEBI" id="CHEBI:18420"/>
    </cofactor>
    <text evidence="1">Binds 2 magnesium ions per tetramer.</text>
</comment>
<comment type="subunit">
    <text evidence="1">Tetramer of two alpha and two beta subunits.</text>
</comment>
<comment type="subcellular location">
    <subcellularLocation>
        <location evidence="1">Cytoplasm</location>
    </subcellularLocation>
</comment>
<comment type="similarity">
    <text evidence="1">Belongs to the class-II aminoacyl-tRNA synthetase family. Phe-tRNA synthetase alpha subunit type 1 subfamily.</text>
</comment>
<keyword id="KW-0030">Aminoacyl-tRNA synthetase</keyword>
<keyword id="KW-0067">ATP-binding</keyword>
<keyword id="KW-0963">Cytoplasm</keyword>
<keyword id="KW-0436">Ligase</keyword>
<keyword id="KW-0460">Magnesium</keyword>
<keyword id="KW-0479">Metal-binding</keyword>
<keyword id="KW-0547">Nucleotide-binding</keyword>
<keyword id="KW-0648">Protein biosynthesis</keyword>
<keyword id="KW-1185">Reference proteome</keyword>
<reference key="1">
    <citation type="journal article" date="2003" name="Proc. Natl. Acad. Sci. U.S.A.">
        <title>The complete genome sequence of Mycobacterium bovis.</title>
        <authorList>
            <person name="Garnier T."/>
            <person name="Eiglmeier K."/>
            <person name="Camus J.-C."/>
            <person name="Medina N."/>
            <person name="Mansoor H."/>
            <person name="Pryor M."/>
            <person name="Duthoy S."/>
            <person name="Grondin S."/>
            <person name="Lacroix C."/>
            <person name="Monsempe C."/>
            <person name="Simon S."/>
            <person name="Harris B."/>
            <person name="Atkin R."/>
            <person name="Doggett J."/>
            <person name="Mayes R."/>
            <person name="Keating L."/>
            <person name="Wheeler P.R."/>
            <person name="Parkhill J."/>
            <person name="Barrell B.G."/>
            <person name="Cole S.T."/>
            <person name="Gordon S.V."/>
            <person name="Hewinson R.G."/>
        </authorList>
    </citation>
    <scope>NUCLEOTIDE SEQUENCE [LARGE SCALE GENOMIC DNA]</scope>
    <source>
        <strain>ATCC BAA-935 / AF2122/97</strain>
    </source>
</reference>
<reference key="2">
    <citation type="journal article" date="2017" name="Genome Announc.">
        <title>Updated reference genome sequence and annotation of Mycobacterium bovis AF2122/97.</title>
        <authorList>
            <person name="Malone K.M."/>
            <person name="Farrell D."/>
            <person name="Stuber T.P."/>
            <person name="Schubert O.T."/>
            <person name="Aebersold R."/>
            <person name="Robbe-Austerman S."/>
            <person name="Gordon S.V."/>
        </authorList>
    </citation>
    <scope>NUCLEOTIDE SEQUENCE [LARGE SCALE GENOMIC DNA]</scope>
    <scope>GENOME REANNOTATION</scope>
    <source>
        <strain>ATCC BAA-935 / AF2122/97</strain>
    </source>
</reference>
<gene>
    <name evidence="1" type="primary">pheS</name>
    <name type="ordered locus">BQ2027_MB1676</name>
</gene>
<evidence type="ECO:0000255" key="1">
    <source>
        <dbReference type="HAMAP-Rule" id="MF_00281"/>
    </source>
</evidence>
<feature type="chain" id="PRO_0000126727" description="Phenylalanine--tRNA ligase alpha subunit">
    <location>
        <begin position="1"/>
        <end position="341"/>
    </location>
</feature>
<feature type="binding site" evidence="1">
    <location>
        <position position="259"/>
    </location>
    <ligand>
        <name>Mg(2+)</name>
        <dbReference type="ChEBI" id="CHEBI:18420"/>
        <note>shared with beta subunit</note>
    </ligand>
</feature>